<name>MTFA_PECAS</name>
<organism>
    <name type="scientific">Pectobacterium atrosepticum (strain SCRI 1043 / ATCC BAA-672)</name>
    <name type="common">Erwinia carotovora subsp. atroseptica</name>
    <dbReference type="NCBI Taxonomy" id="218491"/>
    <lineage>
        <taxon>Bacteria</taxon>
        <taxon>Pseudomonadati</taxon>
        <taxon>Pseudomonadota</taxon>
        <taxon>Gammaproteobacteria</taxon>
        <taxon>Enterobacterales</taxon>
        <taxon>Pectobacteriaceae</taxon>
        <taxon>Pectobacterium</taxon>
    </lineage>
</organism>
<reference key="1">
    <citation type="journal article" date="2004" name="Proc. Natl. Acad. Sci. U.S.A.">
        <title>Genome sequence of the enterobacterial phytopathogen Erwinia carotovora subsp. atroseptica and characterization of virulence factors.</title>
        <authorList>
            <person name="Bell K.S."/>
            <person name="Sebaihia M."/>
            <person name="Pritchard L."/>
            <person name="Holden M.T.G."/>
            <person name="Hyman L.J."/>
            <person name="Holeva M.C."/>
            <person name="Thomson N.R."/>
            <person name="Bentley S.D."/>
            <person name="Churcher L.J.C."/>
            <person name="Mungall K."/>
            <person name="Atkin R."/>
            <person name="Bason N."/>
            <person name="Brooks K."/>
            <person name="Chillingworth T."/>
            <person name="Clark K."/>
            <person name="Doggett J."/>
            <person name="Fraser A."/>
            <person name="Hance Z."/>
            <person name="Hauser H."/>
            <person name="Jagels K."/>
            <person name="Moule S."/>
            <person name="Norbertczak H."/>
            <person name="Ormond D."/>
            <person name="Price C."/>
            <person name="Quail M.A."/>
            <person name="Sanders M."/>
            <person name="Walker D."/>
            <person name="Whitehead S."/>
            <person name="Salmond G.P.C."/>
            <person name="Birch P.R.J."/>
            <person name="Parkhill J."/>
            <person name="Toth I.K."/>
        </authorList>
    </citation>
    <scope>NUCLEOTIDE SEQUENCE [LARGE SCALE GENOMIC DNA]</scope>
    <source>
        <strain>SCRI 1043 / ATCC BAA-672</strain>
    </source>
</reference>
<evidence type="ECO:0000255" key="1">
    <source>
        <dbReference type="HAMAP-Rule" id="MF_01593"/>
    </source>
</evidence>
<accession>Q6D6K0</accession>
<comment type="function">
    <text evidence="1">Involved in the modulation of the activity of the glucose-phosphotransferase system (glucose-PTS). Interacts with the transcriptional repressor Mlc, preventing its interaction with DNA and leading to the modulation of expression of genes regulated by Mlc, including ptsG, which encodes the PTS system glucose-specific EIICB component.</text>
</comment>
<comment type="function">
    <text evidence="1">Shows zinc-dependent metallopeptidase activity.</text>
</comment>
<comment type="cofactor">
    <cofactor evidence="1">
        <name>Zn(2+)</name>
        <dbReference type="ChEBI" id="CHEBI:29105"/>
    </cofactor>
    <text evidence="1">Binds 1 zinc ion per subunit.</text>
</comment>
<comment type="subunit">
    <text evidence="1">Interacts with Mlc.</text>
</comment>
<comment type="subcellular location">
    <subcellularLocation>
        <location evidence="1">Cytoplasm</location>
    </subcellularLocation>
</comment>
<comment type="similarity">
    <text evidence="1">Belongs to the MtfA family.</text>
</comment>
<protein>
    <recommendedName>
        <fullName evidence="1">Mlc titration factor A</fullName>
    </recommendedName>
    <alternativeName>
        <fullName evidence="1">Probable zinc metallopeptidase MtfA</fullName>
        <ecNumber evidence="1">3.4.11.-</ecNumber>
    </alternativeName>
</protein>
<dbReference type="EC" id="3.4.11.-" evidence="1"/>
<dbReference type="EMBL" id="BX950851">
    <property type="protein sequence ID" value="CAG74586.1"/>
    <property type="molecule type" value="Genomic_DNA"/>
</dbReference>
<dbReference type="RefSeq" id="WP_011093259.1">
    <property type="nucleotide sequence ID" value="NC_004547.2"/>
</dbReference>
<dbReference type="SMR" id="Q6D6K0"/>
<dbReference type="STRING" id="218491.ECA1680"/>
<dbReference type="MEROPS" id="M90.001"/>
<dbReference type="GeneID" id="57209607"/>
<dbReference type="KEGG" id="eca:ECA1680"/>
<dbReference type="PATRIC" id="fig|218491.5.peg.1706"/>
<dbReference type="eggNOG" id="COG3228">
    <property type="taxonomic scope" value="Bacteria"/>
</dbReference>
<dbReference type="HOGENOM" id="CLU_063037_2_0_6"/>
<dbReference type="OrthoDB" id="9786424at2"/>
<dbReference type="Proteomes" id="UP000007966">
    <property type="component" value="Chromosome"/>
</dbReference>
<dbReference type="GO" id="GO:0005829">
    <property type="term" value="C:cytosol"/>
    <property type="evidence" value="ECO:0007669"/>
    <property type="project" value="TreeGrafter"/>
</dbReference>
<dbReference type="GO" id="GO:0004177">
    <property type="term" value="F:aminopeptidase activity"/>
    <property type="evidence" value="ECO:0007669"/>
    <property type="project" value="UniProtKB-UniRule"/>
</dbReference>
<dbReference type="GO" id="GO:0008237">
    <property type="term" value="F:metallopeptidase activity"/>
    <property type="evidence" value="ECO:0007669"/>
    <property type="project" value="UniProtKB-UniRule"/>
</dbReference>
<dbReference type="GO" id="GO:0008270">
    <property type="term" value="F:zinc ion binding"/>
    <property type="evidence" value="ECO:0007669"/>
    <property type="project" value="UniProtKB-UniRule"/>
</dbReference>
<dbReference type="GO" id="GO:0006508">
    <property type="term" value="P:proteolysis"/>
    <property type="evidence" value="ECO:0007669"/>
    <property type="project" value="UniProtKB-KW"/>
</dbReference>
<dbReference type="CDD" id="cd20169">
    <property type="entry name" value="Peptidase_M90_mtfA"/>
    <property type="match status" value="1"/>
</dbReference>
<dbReference type="FunFam" id="1.10.472.150:FF:000001">
    <property type="entry name" value="Protein MtfA"/>
    <property type="match status" value="1"/>
</dbReference>
<dbReference type="FunFam" id="3.40.390.10:FF:000012">
    <property type="entry name" value="Protein MtfA"/>
    <property type="match status" value="1"/>
</dbReference>
<dbReference type="Gene3D" id="3.40.390.10">
    <property type="entry name" value="Collagenase (Catalytic Domain)"/>
    <property type="match status" value="1"/>
</dbReference>
<dbReference type="Gene3D" id="1.10.472.150">
    <property type="entry name" value="Glucose-regulated metallo-peptidase M90, N-terminal domain"/>
    <property type="match status" value="1"/>
</dbReference>
<dbReference type="HAMAP" id="MF_01593">
    <property type="entry name" value="MtfA"/>
    <property type="match status" value="1"/>
</dbReference>
<dbReference type="InterPro" id="IPR024079">
    <property type="entry name" value="MetalloPept_cat_dom_sf"/>
</dbReference>
<dbReference type="InterPro" id="IPR057256">
    <property type="entry name" value="MtfA_enterob"/>
</dbReference>
<dbReference type="InterPro" id="IPR010384">
    <property type="entry name" value="MtfA_fam"/>
</dbReference>
<dbReference type="InterPro" id="IPR042252">
    <property type="entry name" value="MtfA_N"/>
</dbReference>
<dbReference type="NCBIfam" id="NF011939">
    <property type="entry name" value="PRK15410.1"/>
    <property type="match status" value="1"/>
</dbReference>
<dbReference type="PANTHER" id="PTHR30164">
    <property type="entry name" value="MTFA PEPTIDASE"/>
    <property type="match status" value="1"/>
</dbReference>
<dbReference type="PANTHER" id="PTHR30164:SF2">
    <property type="entry name" value="PROTEIN MTFA"/>
    <property type="match status" value="1"/>
</dbReference>
<dbReference type="Pfam" id="PF06167">
    <property type="entry name" value="Peptidase_M90"/>
    <property type="match status" value="1"/>
</dbReference>
<dbReference type="SUPFAM" id="SSF55486">
    <property type="entry name" value="Metalloproteases ('zincins'), catalytic domain"/>
    <property type="match status" value="1"/>
</dbReference>
<proteinExistence type="inferred from homology"/>
<gene>
    <name evidence="1" type="primary">mtfA</name>
    <name type="ordered locus">ECA1680</name>
</gene>
<keyword id="KW-0031">Aminopeptidase</keyword>
<keyword id="KW-0963">Cytoplasm</keyword>
<keyword id="KW-0378">Hydrolase</keyword>
<keyword id="KW-0479">Metal-binding</keyword>
<keyword id="KW-0482">Metalloprotease</keyword>
<keyword id="KW-0645">Protease</keyword>
<keyword id="KW-1185">Reference proteome</keyword>
<keyword id="KW-0862">Zinc</keyword>
<sequence length="265" mass="30313">MIKWPWNNSQPQVQTLEHWQAAISIPLLAPLSDEEHQKLAALADQFLKQKRLIPLQELLLTDIMQRRIALLFSLPVLSLGIGALDGFHEVLVYPGPFIVEEEWQDDIGLVHTGKMVQSGQSWDQGPIVLNWQEVQDSFDLSGFNLIIHEVAHKLDIRSSGEATGVPLIPLRDIAVWEQHLHSAMDALQEEIDLVGEDAASMDPYAVHDPAECFAVLSEYFFSAPELLEERFPDLYRCFQKFYRQDPLARLKSWQNNINYRAPSIY</sequence>
<feature type="chain" id="PRO_0000316309" description="Mlc titration factor A">
    <location>
        <begin position="1"/>
        <end position="265"/>
    </location>
</feature>
<feature type="binding site" evidence="1">
    <location>
        <position position="111"/>
    </location>
    <ligand>
        <name>Zn(2+)</name>
        <dbReference type="ChEBI" id="CHEBI:29105"/>
    </ligand>
</feature>
<feature type="binding site" evidence="1">
    <location>
        <position position="148"/>
    </location>
    <ligand>
        <name>Zn(2+)</name>
        <dbReference type="ChEBI" id="CHEBI:29105"/>
    </ligand>
</feature>
<feature type="binding site" evidence="1">
    <location>
        <position position="152"/>
    </location>
    <ligand>
        <name>Zn(2+)</name>
        <dbReference type="ChEBI" id="CHEBI:29105"/>
    </ligand>
</feature>
<feature type="binding site" evidence="1">
    <location>
        <position position="211"/>
    </location>
    <ligand>
        <name>Zn(2+)</name>
        <dbReference type="ChEBI" id="CHEBI:29105"/>
    </ligand>
</feature>